<name>RHAD_KLEP3</name>
<protein>
    <recommendedName>
        <fullName evidence="1">Rhamnulose-1-phosphate aldolase</fullName>
        <ecNumber evidence="1">4.1.2.19</ecNumber>
    </recommendedName>
</protein>
<comment type="function">
    <text evidence="1">Catalyzes the reversible cleavage of L-rhamnulose-1-phosphate to dihydroxyacetone phosphate (DHAP) and L-lactaldehyde.</text>
</comment>
<comment type="catalytic activity">
    <reaction evidence="1">
        <text>L-rhamnulose 1-phosphate = (S)-lactaldehyde + dihydroxyacetone phosphate</text>
        <dbReference type="Rhea" id="RHEA:19689"/>
        <dbReference type="ChEBI" id="CHEBI:18041"/>
        <dbReference type="ChEBI" id="CHEBI:57642"/>
        <dbReference type="ChEBI" id="CHEBI:58313"/>
        <dbReference type="EC" id="4.1.2.19"/>
    </reaction>
</comment>
<comment type="cofactor">
    <cofactor evidence="1">
        <name>Zn(2+)</name>
        <dbReference type="ChEBI" id="CHEBI:29105"/>
    </cofactor>
    <text evidence="1">Binds 1 zinc ion per subunit.</text>
</comment>
<comment type="pathway">
    <text evidence="1">Carbohydrate degradation; L-rhamnose degradation; glycerone phosphate from L-rhamnose: step 3/3.</text>
</comment>
<comment type="subunit">
    <text evidence="1">Homotetramer.</text>
</comment>
<comment type="subcellular location">
    <subcellularLocation>
        <location evidence="1">Cytoplasm</location>
    </subcellularLocation>
</comment>
<comment type="similarity">
    <text evidence="1">Belongs to the aldolase class II family. RhaD subfamily.</text>
</comment>
<organism>
    <name type="scientific">Klebsiella pneumoniae (strain 342)</name>
    <dbReference type="NCBI Taxonomy" id="507522"/>
    <lineage>
        <taxon>Bacteria</taxon>
        <taxon>Pseudomonadati</taxon>
        <taxon>Pseudomonadota</taxon>
        <taxon>Gammaproteobacteria</taxon>
        <taxon>Enterobacterales</taxon>
        <taxon>Enterobacteriaceae</taxon>
        <taxon>Klebsiella/Raoultella group</taxon>
        <taxon>Klebsiella</taxon>
        <taxon>Klebsiella pneumoniae complex</taxon>
    </lineage>
</organism>
<dbReference type="EC" id="4.1.2.19" evidence="1"/>
<dbReference type="EMBL" id="CP000964">
    <property type="protein sequence ID" value="ACI07601.1"/>
    <property type="molecule type" value="Genomic_DNA"/>
</dbReference>
<dbReference type="SMR" id="B5XZ54"/>
<dbReference type="KEGG" id="kpe:KPK_5470"/>
<dbReference type="HOGENOM" id="CLU_076831_0_0_6"/>
<dbReference type="UniPathway" id="UPA00541">
    <property type="reaction ID" value="UER00603"/>
</dbReference>
<dbReference type="Proteomes" id="UP000001734">
    <property type="component" value="Chromosome"/>
</dbReference>
<dbReference type="GO" id="GO:0005829">
    <property type="term" value="C:cytosol"/>
    <property type="evidence" value="ECO:0007669"/>
    <property type="project" value="TreeGrafter"/>
</dbReference>
<dbReference type="GO" id="GO:0046872">
    <property type="term" value="F:metal ion binding"/>
    <property type="evidence" value="ECO:0007669"/>
    <property type="project" value="UniProtKB-KW"/>
</dbReference>
<dbReference type="GO" id="GO:0008994">
    <property type="term" value="F:rhamnulose-1-phosphate aldolase activity"/>
    <property type="evidence" value="ECO:0007669"/>
    <property type="project" value="UniProtKB-UniRule"/>
</dbReference>
<dbReference type="GO" id="GO:0019323">
    <property type="term" value="P:pentose catabolic process"/>
    <property type="evidence" value="ECO:0007669"/>
    <property type="project" value="TreeGrafter"/>
</dbReference>
<dbReference type="GO" id="GO:0019301">
    <property type="term" value="P:rhamnose catabolic process"/>
    <property type="evidence" value="ECO:0007669"/>
    <property type="project" value="UniProtKB-UniRule"/>
</dbReference>
<dbReference type="CDD" id="cd00398">
    <property type="entry name" value="Aldolase_II"/>
    <property type="match status" value="1"/>
</dbReference>
<dbReference type="FunFam" id="3.40.225.10:FF:000006">
    <property type="entry name" value="Rhamnulose-1-phosphate aldolase"/>
    <property type="match status" value="1"/>
</dbReference>
<dbReference type="Gene3D" id="3.40.225.10">
    <property type="entry name" value="Class II aldolase/adducin N-terminal domain"/>
    <property type="match status" value="1"/>
</dbReference>
<dbReference type="HAMAP" id="MF_00770">
    <property type="entry name" value="RhaD"/>
    <property type="match status" value="1"/>
</dbReference>
<dbReference type="InterPro" id="IPR050197">
    <property type="entry name" value="Aldolase_class_II_sugar_metab"/>
</dbReference>
<dbReference type="InterPro" id="IPR001303">
    <property type="entry name" value="Aldolase_II/adducin_N"/>
</dbReference>
<dbReference type="InterPro" id="IPR036409">
    <property type="entry name" value="Aldolase_II/adducin_N_sf"/>
</dbReference>
<dbReference type="InterPro" id="IPR013447">
    <property type="entry name" value="Rhamnulose-1-P_Aldolase"/>
</dbReference>
<dbReference type="NCBIfam" id="NF002963">
    <property type="entry name" value="PRK03634.1"/>
    <property type="match status" value="1"/>
</dbReference>
<dbReference type="NCBIfam" id="TIGR02624">
    <property type="entry name" value="rhamnu_1P_ald"/>
    <property type="match status" value="1"/>
</dbReference>
<dbReference type="PANTHER" id="PTHR22789">
    <property type="entry name" value="FUCULOSE PHOSPHATE ALDOLASE"/>
    <property type="match status" value="1"/>
</dbReference>
<dbReference type="PANTHER" id="PTHR22789:SF16">
    <property type="entry name" value="RHAMNULOSE-1-PHOSPHATE ALDOLASE"/>
    <property type="match status" value="1"/>
</dbReference>
<dbReference type="Pfam" id="PF00596">
    <property type="entry name" value="Aldolase_II"/>
    <property type="match status" value="1"/>
</dbReference>
<dbReference type="SMART" id="SM01007">
    <property type="entry name" value="Aldolase_II"/>
    <property type="match status" value="1"/>
</dbReference>
<dbReference type="SUPFAM" id="SSF53639">
    <property type="entry name" value="AraD/HMP-PK domain-like"/>
    <property type="match status" value="1"/>
</dbReference>
<feature type="chain" id="PRO_1000193730" description="Rhamnulose-1-phosphate aldolase">
    <location>
        <begin position="1"/>
        <end position="276"/>
    </location>
</feature>
<feature type="active site" evidence="1">
    <location>
        <position position="117"/>
    </location>
</feature>
<feature type="binding site" evidence="1">
    <location>
        <position position="141"/>
    </location>
    <ligand>
        <name>Zn(2+)</name>
        <dbReference type="ChEBI" id="CHEBI:29105"/>
    </ligand>
</feature>
<feature type="binding site" evidence="1">
    <location>
        <position position="143"/>
    </location>
    <ligand>
        <name>Zn(2+)</name>
        <dbReference type="ChEBI" id="CHEBI:29105"/>
    </ligand>
</feature>
<feature type="binding site" evidence="1">
    <location>
        <position position="212"/>
    </location>
    <ligand>
        <name>Zn(2+)</name>
        <dbReference type="ChEBI" id="CHEBI:29105"/>
    </ligand>
</feature>
<accession>B5XZ54</accession>
<evidence type="ECO:0000255" key="1">
    <source>
        <dbReference type="HAMAP-Rule" id="MF_00770"/>
    </source>
</evidence>
<gene>
    <name evidence="1" type="primary">rhaD</name>
    <name type="ordered locus">KPK_5470</name>
</gene>
<proteinExistence type="inferred from homology"/>
<sequence length="276" mass="30414">MQTIIDAWFVQGMIKATSDAWLKGWDERNGGNLTLRLDEADIEPYAADFHAKPRYIALSQPMPILANQPFIVTGSGKFFRNVQLDPAANLGVVKVDSDGAGYHILWGLTEDAVPTSELPAHFLSHSERIKLTGGKDRVIMHCHATNLIALTYVLENHSDLFTRKLWEGSTECLVVFPDGVGILPWMVPGTDEIGQATAETMQKHSLVLWPFHGVFGSGPTLDETFGLIDTAEKSAEVLVKVLSMGGMKQTITREELIALGKRFNVQPLQSALDLYP</sequence>
<keyword id="KW-0963">Cytoplasm</keyword>
<keyword id="KW-0456">Lyase</keyword>
<keyword id="KW-0479">Metal-binding</keyword>
<keyword id="KW-0684">Rhamnose metabolism</keyword>
<keyword id="KW-0862">Zinc</keyword>
<reference key="1">
    <citation type="journal article" date="2008" name="PLoS Genet.">
        <title>Complete genome sequence of the N2-fixing broad host range endophyte Klebsiella pneumoniae 342 and virulence predictions verified in mice.</title>
        <authorList>
            <person name="Fouts D.E."/>
            <person name="Tyler H.L."/>
            <person name="DeBoy R.T."/>
            <person name="Daugherty S."/>
            <person name="Ren Q."/>
            <person name="Badger J.H."/>
            <person name="Durkin A.S."/>
            <person name="Huot H."/>
            <person name="Shrivastava S."/>
            <person name="Kothari S."/>
            <person name="Dodson R.J."/>
            <person name="Mohamoud Y."/>
            <person name="Khouri H."/>
            <person name="Roesch L.F.W."/>
            <person name="Krogfelt K.A."/>
            <person name="Struve C."/>
            <person name="Triplett E.W."/>
            <person name="Methe B.A."/>
        </authorList>
    </citation>
    <scope>NUCLEOTIDE SEQUENCE [LARGE SCALE GENOMIC DNA]</scope>
    <source>
        <strain>342</strain>
    </source>
</reference>